<protein>
    <recommendedName>
        <fullName evidence="1">Nucleotide-binding protein SACE_6882</fullName>
    </recommendedName>
</protein>
<organism>
    <name type="scientific">Saccharopolyspora erythraea (strain ATCC 11635 / DSM 40517 / JCM 4748 / NBRC 13426 / NCIMB 8594 / NRRL 2338)</name>
    <dbReference type="NCBI Taxonomy" id="405948"/>
    <lineage>
        <taxon>Bacteria</taxon>
        <taxon>Bacillati</taxon>
        <taxon>Actinomycetota</taxon>
        <taxon>Actinomycetes</taxon>
        <taxon>Pseudonocardiales</taxon>
        <taxon>Pseudonocardiaceae</taxon>
        <taxon>Saccharopolyspora</taxon>
    </lineage>
</organism>
<reference key="1">
    <citation type="journal article" date="2007" name="Nat. Biotechnol.">
        <title>Complete genome sequence of the erythromycin-producing bacterium Saccharopolyspora erythraea NRRL23338.</title>
        <authorList>
            <person name="Oliynyk M."/>
            <person name="Samborskyy M."/>
            <person name="Lester J.B."/>
            <person name="Mironenko T."/>
            <person name="Scott N."/>
            <person name="Dickens S."/>
            <person name="Haydock S.F."/>
            <person name="Leadlay P.F."/>
        </authorList>
    </citation>
    <scope>NUCLEOTIDE SEQUENCE [LARGE SCALE GENOMIC DNA]</scope>
    <source>
        <strain>ATCC 11635 / DSM 40517 / JCM 4748 / NBRC 13426 / NCIMB 8594 / NRRL 2338</strain>
    </source>
</reference>
<dbReference type="EMBL" id="AM420293">
    <property type="protein sequence ID" value="CAM06046.1"/>
    <property type="molecule type" value="Genomic_DNA"/>
</dbReference>
<dbReference type="RefSeq" id="WP_009944072.1">
    <property type="nucleotide sequence ID" value="NC_009142.1"/>
</dbReference>
<dbReference type="SMR" id="A4FPS1"/>
<dbReference type="STRING" id="405948.SACE_6882"/>
<dbReference type="KEGG" id="sen:SACE_6882"/>
<dbReference type="eggNOG" id="COG1666">
    <property type="taxonomic scope" value="Bacteria"/>
</dbReference>
<dbReference type="HOGENOM" id="CLU_099839_0_0_11"/>
<dbReference type="OrthoDB" id="9801447at2"/>
<dbReference type="Proteomes" id="UP000006728">
    <property type="component" value="Chromosome"/>
</dbReference>
<dbReference type="GO" id="GO:0005829">
    <property type="term" value="C:cytosol"/>
    <property type="evidence" value="ECO:0007669"/>
    <property type="project" value="TreeGrafter"/>
</dbReference>
<dbReference type="GO" id="GO:0000166">
    <property type="term" value="F:nucleotide binding"/>
    <property type="evidence" value="ECO:0007669"/>
    <property type="project" value="TreeGrafter"/>
</dbReference>
<dbReference type="CDD" id="cd11740">
    <property type="entry name" value="YajQ_like"/>
    <property type="match status" value="1"/>
</dbReference>
<dbReference type="FunFam" id="3.30.70.860:FF:000004">
    <property type="entry name" value="UPF0234 protein AWC22_11905"/>
    <property type="match status" value="1"/>
</dbReference>
<dbReference type="Gene3D" id="3.30.70.860">
    <property type="match status" value="1"/>
</dbReference>
<dbReference type="Gene3D" id="3.30.70.990">
    <property type="entry name" value="YajQ-like, domain 2"/>
    <property type="match status" value="1"/>
</dbReference>
<dbReference type="HAMAP" id="MF_00632">
    <property type="entry name" value="YajQ"/>
    <property type="match status" value="1"/>
</dbReference>
<dbReference type="InterPro" id="IPR007551">
    <property type="entry name" value="DUF520"/>
</dbReference>
<dbReference type="InterPro" id="IPR035571">
    <property type="entry name" value="UPF0234-like_C"/>
</dbReference>
<dbReference type="InterPro" id="IPR035570">
    <property type="entry name" value="UPF0234_N"/>
</dbReference>
<dbReference type="InterPro" id="IPR036183">
    <property type="entry name" value="YajQ-like_sf"/>
</dbReference>
<dbReference type="NCBIfam" id="NF003819">
    <property type="entry name" value="PRK05412.1"/>
    <property type="match status" value="1"/>
</dbReference>
<dbReference type="PANTHER" id="PTHR30476">
    <property type="entry name" value="UPF0234 PROTEIN YAJQ"/>
    <property type="match status" value="1"/>
</dbReference>
<dbReference type="PANTHER" id="PTHR30476:SF0">
    <property type="entry name" value="UPF0234 PROTEIN YAJQ"/>
    <property type="match status" value="1"/>
</dbReference>
<dbReference type="Pfam" id="PF04461">
    <property type="entry name" value="DUF520"/>
    <property type="match status" value="1"/>
</dbReference>
<dbReference type="SUPFAM" id="SSF89963">
    <property type="entry name" value="YajQ-like"/>
    <property type="match status" value="2"/>
</dbReference>
<proteinExistence type="inferred from homology"/>
<feature type="chain" id="PRO_1000051754" description="Nucleotide-binding protein SACE_6882">
    <location>
        <begin position="1"/>
        <end position="163"/>
    </location>
</feature>
<sequence length="163" mass="18133">MADPSFDVVSKIDRQEVDNALNQAAKELANRFDFRGTGTRIQWSGEEAITLESETEERCKAAIDVFKEKLIKRGISLKAFDVGEPASSGRVYKVTGKLVQGIAQDVAKKISKKIRDEGPKGVQAQIQGDQLRVSGKKKDDLQTVIQLLKSSDFDVALQFENYR</sequence>
<evidence type="ECO:0000255" key="1">
    <source>
        <dbReference type="HAMAP-Rule" id="MF_00632"/>
    </source>
</evidence>
<gene>
    <name type="ordered locus">SACE_6882</name>
</gene>
<accession>A4FPS1</accession>
<comment type="function">
    <text evidence="1">Nucleotide-binding protein.</text>
</comment>
<comment type="similarity">
    <text evidence="1">Belongs to the YajQ family.</text>
</comment>
<name>Y6882_SACEN</name>
<keyword id="KW-0547">Nucleotide-binding</keyword>
<keyword id="KW-1185">Reference proteome</keyword>